<reference key="1">
    <citation type="journal article" date="2004" name="Proc. Natl. Acad. Sci. U.S.A.">
        <title>Complete genomes of two clinical Staphylococcus aureus strains: evidence for the rapid evolution of virulence and drug resistance.</title>
        <authorList>
            <person name="Holden M.T.G."/>
            <person name="Feil E.J."/>
            <person name="Lindsay J.A."/>
            <person name="Peacock S.J."/>
            <person name="Day N.P.J."/>
            <person name="Enright M.C."/>
            <person name="Foster T.J."/>
            <person name="Moore C.E."/>
            <person name="Hurst L."/>
            <person name="Atkin R."/>
            <person name="Barron A."/>
            <person name="Bason N."/>
            <person name="Bentley S.D."/>
            <person name="Chillingworth C."/>
            <person name="Chillingworth T."/>
            <person name="Churcher C."/>
            <person name="Clark L."/>
            <person name="Corton C."/>
            <person name="Cronin A."/>
            <person name="Doggett J."/>
            <person name="Dowd L."/>
            <person name="Feltwell T."/>
            <person name="Hance Z."/>
            <person name="Harris B."/>
            <person name="Hauser H."/>
            <person name="Holroyd S."/>
            <person name="Jagels K."/>
            <person name="James K.D."/>
            <person name="Lennard N."/>
            <person name="Line A."/>
            <person name="Mayes R."/>
            <person name="Moule S."/>
            <person name="Mungall K."/>
            <person name="Ormond D."/>
            <person name="Quail M.A."/>
            <person name="Rabbinowitsch E."/>
            <person name="Rutherford K.M."/>
            <person name="Sanders M."/>
            <person name="Sharp S."/>
            <person name="Simmonds M."/>
            <person name="Stevens K."/>
            <person name="Whitehead S."/>
            <person name="Barrell B.G."/>
            <person name="Spratt B.G."/>
            <person name="Parkhill J."/>
        </authorList>
    </citation>
    <scope>NUCLEOTIDE SEQUENCE [LARGE SCALE GENOMIC DNA]</scope>
    <source>
        <strain>MSSA476</strain>
    </source>
</reference>
<dbReference type="EC" id="6.3.3.1" evidence="1"/>
<dbReference type="EMBL" id="BX571857">
    <property type="protein sequence ID" value="CAG42781.1"/>
    <property type="molecule type" value="Genomic_DNA"/>
</dbReference>
<dbReference type="RefSeq" id="WP_000030823.1">
    <property type="nucleotide sequence ID" value="NC_002953.3"/>
</dbReference>
<dbReference type="SMR" id="Q6GAE2"/>
<dbReference type="KEGG" id="sas:SAS1007"/>
<dbReference type="HOGENOM" id="CLU_047116_0_0_9"/>
<dbReference type="UniPathway" id="UPA00074">
    <property type="reaction ID" value="UER00129"/>
</dbReference>
<dbReference type="GO" id="GO:0005829">
    <property type="term" value="C:cytosol"/>
    <property type="evidence" value="ECO:0007669"/>
    <property type="project" value="TreeGrafter"/>
</dbReference>
<dbReference type="GO" id="GO:0005524">
    <property type="term" value="F:ATP binding"/>
    <property type="evidence" value="ECO:0007669"/>
    <property type="project" value="UniProtKB-KW"/>
</dbReference>
<dbReference type="GO" id="GO:0004637">
    <property type="term" value="F:phosphoribosylamine-glycine ligase activity"/>
    <property type="evidence" value="ECO:0007669"/>
    <property type="project" value="TreeGrafter"/>
</dbReference>
<dbReference type="GO" id="GO:0004641">
    <property type="term" value="F:phosphoribosylformylglycinamidine cyclo-ligase activity"/>
    <property type="evidence" value="ECO:0007669"/>
    <property type="project" value="UniProtKB-UniRule"/>
</dbReference>
<dbReference type="GO" id="GO:0006189">
    <property type="term" value="P:'de novo' IMP biosynthetic process"/>
    <property type="evidence" value="ECO:0007669"/>
    <property type="project" value="UniProtKB-UniRule"/>
</dbReference>
<dbReference type="GO" id="GO:0046084">
    <property type="term" value="P:adenine biosynthetic process"/>
    <property type="evidence" value="ECO:0007669"/>
    <property type="project" value="TreeGrafter"/>
</dbReference>
<dbReference type="CDD" id="cd02196">
    <property type="entry name" value="PurM"/>
    <property type="match status" value="1"/>
</dbReference>
<dbReference type="FunFam" id="3.30.1330.10:FF:000001">
    <property type="entry name" value="Phosphoribosylformylglycinamidine cyclo-ligase"/>
    <property type="match status" value="1"/>
</dbReference>
<dbReference type="FunFam" id="3.90.650.10:FF:000001">
    <property type="entry name" value="Phosphoribosylformylglycinamidine cyclo-ligase"/>
    <property type="match status" value="1"/>
</dbReference>
<dbReference type="Gene3D" id="3.90.650.10">
    <property type="entry name" value="PurM-like C-terminal domain"/>
    <property type="match status" value="1"/>
</dbReference>
<dbReference type="Gene3D" id="3.30.1330.10">
    <property type="entry name" value="PurM-like, N-terminal domain"/>
    <property type="match status" value="1"/>
</dbReference>
<dbReference type="HAMAP" id="MF_00741">
    <property type="entry name" value="AIRS"/>
    <property type="match status" value="1"/>
</dbReference>
<dbReference type="InterPro" id="IPR010918">
    <property type="entry name" value="PurM-like_C_dom"/>
</dbReference>
<dbReference type="InterPro" id="IPR036676">
    <property type="entry name" value="PurM-like_C_sf"/>
</dbReference>
<dbReference type="InterPro" id="IPR016188">
    <property type="entry name" value="PurM-like_N"/>
</dbReference>
<dbReference type="InterPro" id="IPR036921">
    <property type="entry name" value="PurM-like_N_sf"/>
</dbReference>
<dbReference type="InterPro" id="IPR004733">
    <property type="entry name" value="PurM_cligase"/>
</dbReference>
<dbReference type="NCBIfam" id="TIGR00878">
    <property type="entry name" value="purM"/>
    <property type="match status" value="1"/>
</dbReference>
<dbReference type="PANTHER" id="PTHR10520:SF12">
    <property type="entry name" value="TRIFUNCTIONAL PURINE BIOSYNTHETIC PROTEIN ADENOSINE-3"/>
    <property type="match status" value="1"/>
</dbReference>
<dbReference type="PANTHER" id="PTHR10520">
    <property type="entry name" value="TRIFUNCTIONAL PURINE BIOSYNTHETIC PROTEIN ADENOSINE-3-RELATED"/>
    <property type="match status" value="1"/>
</dbReference>
<dbReference type="Pfam" id="PF00586">
    <property type="entry name" value="AIRS"/>
    <property type="match status" value="1"/>
</dbReference>
<dbReference type="Pfam" id="PF02769">
    <property type="entry name" value="AIRS_C"/>
    <property type="match status" value="1"/>
</dbReference>
<dbReference type="SUPFAM" id="SSF56042">
    <property type="entry name" value="PurM C-terminal domain-like"/>
    <property type="match status" value="1"/>
</dbReference>
<dbReference type="SUPFAM" id="SSF55326">
    <property type="entry name" value="PurM N-terminal domain-like"/>
    <property type="match status" value="1"/>
</dbReference>
<keyword id="KW-0067">ATP-binding</keyword>
<keyword id="KW-0963">Cytoplasm</keyword>
<keyword id="KW-0436">Ligase</keyword>
<keyword id="KW-0547">Nucleotide-binding</keyword>
<keyword id="KW-0658">Purine biosynthesis</keyword>
<accession>Q6GAE2</accession>
<gene>
    <name evidence="1" type="primary">purM</name>
    <name type="ordered locus">SAS1007</name>
</gene>
<name>PUR5_STAAS</name>
<proteinExistence type="inferred from homology"/>
<sequence>MSKAYEQSGVNIHAGYEAVERMSSHVKRTMRKEVIGGLGGFGATFDLSQLNMTAPVLVSGTDGVGTKLKLAIDYGKHDSIGIDAVAMCVNDILTTGAEPLYFLDYIATNKVVPEVIEQIVKGISDACVETNTALIGGETAEMGEMYHEGEYDVAGFAVGAVEKDDYVDSSEVKEGQVVIGLASSGIHSNGYSLVRKLINESGIDLASNFDNRPFIDVFLEPTKLYVKPVLALKKEVSIKAMNHITGGGFYENIPRALPAGYAARIDTTSFPTPKIFDWLQQQGNIDTNEMYNIFNMGIGYTVIVDEKDASRALKILAEQNVEAYQIGHIMKNESTAIELLGV</sequence>
<comment type="catalytic activity">
    <reaction evidence="1">
        <text>2-formamido-N(1)-(5-O-phospho-beta-D-ribosyl)acetamidine + ATP = 5-amino-1-(5-phospho-beta-D-ribosyl)imidazole + ADP + phosphate + H(+)</text>
        <dbReference type="Rhea" id="RHEA:23032"/>
        <dbReference type="ChEBI" id="CHEBI:15378"/>
        <dbReference type="ChEBI" id="CHEBI:30616"/>
        <dbReference type="ChEBI" id="CHEBI:43474"/>
        <dbReference type="ChEBI" id="CHEBI:137981"/>
        <dbReference type="ChEBI" id="CHEBI:147287"/>
        <dbReference type="ChEBI" id="CHEBI:456216"/>
        <dbReference type="EC" id="6.3.3.1"/>
    </reaction>
</comment>
<comment type="pathway">
    <text evidence="1">Purine metabolism; IMP biosynthesis via de novo pathway; 5-amino-1-(5-phospho-D-ribosyl)imidazole from N(2)-formyl-N(1)-(5-phospho-D-ribosyl)glycinamide: step 2/2.</text>
</comment>
<comment type="subcellular location">
    <subcellularLocation>
        <location evidence="1">Cytoplasm</location>
    </subcellularLocation>
</comment>
<comment type="similarity">
    <text evidence="1">Belongs to the AIR synthase family.</text>
</comment>
<evidence type="ECO:0000255" key="1">
    <source>
        <dbReference type="HAMAP-Rule" id="MF_00741"/>
    </source>
</evidence>
<feature type="chain" id="PRO_0000148249" description="Phosphoribosylformylglycinamidine cyclo-ligase">
    <location>
        <begin position="1"/>
        <end position="342"/>
    </location>
</feature>
<protein>
    <recommendedName>
        <fullName evidence="1">Phosphoribosylformylglycinamidine cyclo-ligase</fullName>
        <ecNumber evidence="1">6.3.3.1</ecNumber>
    </recommendedName>
    <alternativeName>
        <fullName evidence="1">AIR synthase</fullName>
    </alternativeName>
    <alternativeName>
        <fullName evidence="1">AIRS</fullName>
    </alternativeName>
    <alternativeName>
        <fullName evidence="1">Phosphoribosyl-aminoimidazole synthetase</fullName>
    </alternativeName>
</protein>
<organism>
    <name type="scientific">Staphylococcus aureus (strain MSSA476)</name>
    <dbReference type="NCBI Taxonomy" id="282459"/>
    <lineage>
        <taxon>Bacteria</taxon>
        <taxon>Bacillati</taxon>
        <taxon>Bacillota</taxon>
        <taxon>Bacilli</taxon>
        <taxon>Bacillales</taxon>
        <taxon>Staphylococcaceae</taxon>
        <taxon>Staphylococcus</taxon>
    </lineage>
</organism>